<sequence>MASLNTPECPVMSSRPSMSCGNSSSSGLAIQGHSQRPSQTDPSAVEQAAQDSVIDLTNSDYETCDANRATKRQKLDLRIDVPNTQRAPKARFSQAVSSPFALQDTVPPIRTGRPFWDFGEEVSGFGFQGSLESEIPNDEPEQPDSLPPLPVRPWRYRPQGHSSREETPRVNQNAGAEVQTTPFCIEVPEAAPIFDSGKPLDFYPWKGDHPEDSLTDQTAKQGYYDRVQVSQNESNTARPSLYVQLKHRSGLKLLSSVFTAAIDKRQSHCRVTGFSTFKPPPRVTLTDIKRETWLRDLANPSVPLRRLSRTIPHGIRGRILLDQCVNKAIPIGRAVWLVKCVGANEIRAFKRKGTSAAITHSLEVKWVRDWSINVHQFIESVVTACGTPNWASTMSYVIRFAARLFQEQLLDQALCLDWFLQSLRTAPIGTLPIWLSMLGAYWTSLVRYRKRGRPLAESLLEKLKTILSLEDSGPKKQIADRLSWLIKTFAESHPACFVLPLTWRTYKSTLTTCFCLHLSEDNRKIGALSNRNERIVKAEICRQSGRQSPSQQVICLLDSADSLNDMEILSSGCLNLHFDHGSLIMKILEWVSTSFRRGSARVYVAVRLLRKWRRAGMDTDNCIVNFLQQKADTPGFSPANIYHLVCELVRSQSFAVGKYLQWLMARGAVRNDAPMHPTVQLLAHLPRRKLPSHVWNLRNTLLTKAGFLLSSENQQILNTKRYIHHRLPEVITKPIAGDNEGLFTPSDLSNLNWTIKSEIGHWIREHVSLHRKRYLRTAPNHHNACAIEISALTPAQFFEIRDIIECLGDLSLLADILKHTSSSDNIIVLISAVDTLNYCADSFKAIGALSDLFKSALAGYAHVNKADVSIIELISSLLEVGMKLPGEIPVVAMLRRDLSHFDKKFTGAVSSPVSDHTGESVNIASPAFSEGLHQLLNSGSGMDEPNMNKIFDMLSRKLKQSKEPNASSHEIARHLSQLRVLNSDVFDRLMVKWIISTLKSSPRPHLLTFLPPLIGVGCVTFEAFFALIDRLLKSDSHRQSIQDVSGLRYEMINLLRKEIFYELGSIDLVSYRFKTTREEYITHHAYDALGLVNEALANVNPESTSNPPLVPLLCELIIQNLNAFGPEGAGRIVEEFPNCVDIIHQALDVLLGLKAQVGVQKTQSVVGLIDDLSLSYCLVKLRLLLDANPDGDAARSSIVDLLFRTAESDIRNGERRWLEVLNVLPVSAAHLIRQRAEREILSLSLISSSLTTFSSEEDALIYLCIVEELSYSIPDEFSPSSMGADLGDKMFLLLQKTVELANAKKGTDLESGASSTALGVAELSIGVWFFVLLRLVALHRSLVPPNCDSRTEINHQTRLLVQICCISRSPLFARRSTQSFISSISTFTKCDSLLRMLPSSWANLQLQALDVCSTLVDTLSDEARYECARFLRDKCPAFLHPQNDARLLFLFGPIIESQSITTHGSSRASTSTPVTNLTQHVQSTPPPSQNTLTPGMVEEPNLFTNKLRFQQNGRITGPYPPKPWEMLGDAAPIIGINDTPVNLAYFGTRQSKRL</sequence>
<proteinExistence type="inferred from homology"/>
<dbReference type="EMBL" id="GG704911">
    <property type="protein sequence ID" value="EAS35057.3"/>
    <property type="molecule type" value="Genomic_DNA"/>
</dbReference>
<dbReference type="RefSeq" id="XP_001246640.2">
    <property type="nucleotide sequence ID" value="XM_001246639.2"/>
</dbReference>
<dbReference type="STRING" id="246410.Q1EAK2"/>
<dbReference type="GeneID" id="4566041"/>
<dbReference type="KEGG" id="cim:CIMG_00411"/>
<dbReference type="VEuPathDB" id="FungiDB:CIMG_00411"/>
<dbReference type="InParanoid" id="Q1EAK2"/>
<dbReference type="OMA" id="YPVRPWE"/>
<dbReference type="OrthoDB" id="20828at2759"/>
<dbReference type="Proteomes" id="UP000001261">
    <property type="component" value="Unassembled WGS sequence"/>
</dbReference>
<dbReference type="GO" id="GO:0016592">
    <property type="term" value="C:mediator complex"/>
    <property type="evidence" value="ECO:0007669"/>
    <property type="project" value="InterPro"/>
</dbReference>
<dbReference type="GO" id="GO:0003712">
    <property type="term" value="F:transcription coregulator activity"/>
    <property type="evidence" value="ECO:0007669"/>
    <property type="project" value="InterPro"/>
</dbReference>
<dbReference type="GO" id="GO:0006357">
    <property type="term" value="P:regulation of transcription by RNA polymerase II"/>
    <property type="evidence" value="ECO:0007669"/>
    <property type="project" value="InterPro"/>
</dbReference>
<dbReference type="InterPro" id="IPR019035">
    <property type="entry name" value="Mediator_Med12"/>
</dbReference>
<dbReference type="PANTHER" id="PTHR46567">
    <property type="entry name" value="MEDIATOR OF RNA POLYMERASE II TRANSCRIPTION SUBUNIT 12"/>
    <property type="match status" value="1"/>
</dbReference>
<dbReference type="PANTHER" id="PTHR46567:SF1">
    <property type="entry name" value="MEDIATOR OF RNA POLYMERASE II TRANSCRIPTION SUBUNIT 12"/>
    <property type="match status" value="1"/>
</dbReference>
<dbReference type="Pfam" id="PF25326">
    <property type="entry name" value="ARM_SRB8"/>
    <property type="match status" value="1"/>
</dbReference>
<dbReference type="Pfam" id="PF09497">
    <property type="entry name" value="Med12"/>
    <property type="match status" value="1"/>
</dbReference>
<dbReference type="SMART" id="SM01281">
    <property type="entry name" value="Med12"/>
    <property type="match status" value="1"/>
</dbReference>
<keyword id="KW-0010">Activator</keyword>
<keyword id="KW-0539">Nucleus</keyword>
<keyword id="KW-1185">Reference proteome</keyword>
<keyword id="KW-0678">Repressor</keyword>
<keyword id="KW-0804">Transcription</keyword>
<keyword id="KW-0805">Transcription regulation</keyword>
<reference key="1">
    <citation type="journal article" date="2009" name="Genome Res.">
        <title>Comparative genomic analyses of the human fungal pathogens Coccidioides and their relatives.</title>
        <authorList>
            <person name="Sharpton T.J."/>
            <person name="Stajich J.E."/>
            <person name="Rounsley S.D."/>
            <person name="Gardner M.J."/>
            <person name="Wortman J.R."/>
            <person name="Jordar V.S."/>
            <person name="Maiti R."/>
            <person name="Kodira C.D."/>
            <person name="Neafsey D.E."/>
            <person name="Zeng Q."/>
            <person name="Hung C.-Y."/>
            <person name="McMahan C."/>
            <person name="Muszewska A."/>
            <person name="Grynberg M."/>
            <person name="Mandel M.A."/>
            <person name="Kellner E.M."/>
            <person name="Barker B.M."/>
            <person name="Galgiani J.N."/>
            <person name="Orbach M.J."/>
            <person name="Kirkland T.N."/>
            <person name="Cole G.T."/>
            <person name="Henn M.R."/>
            <person name="Birren B.W."/>
            <person name="Taylor J.W."/>
        </authorList>
    </citation>
    <scope>NUCLEOTIDE SEQUENCE [LARGE SCALE GENOMIC DNA]</scope>
    <source>
        <strain>RS</strain>
    </source>
</reference>
<reference key="2">
    <citation type="journal article" date="2010" name="Genome Res.">
        <title>Population genomic sequencing of Coccidioides fungi reveals recent hybridization and transposon control.</title>
        <authorList>
            <person name="Neafsey D.E."/>
            <person name="Barker B.M."/>
            <person name="Sharpton T.J."/>
            <person name="Stajich J.E."/>
            <person name="Park D.J."/>
            <person name="Whiston E."/>
            <person name="Hung C.-Y."/>
            <person name="McMahan C."/>
            <person name="White J."/>
            <person name="Sykes S."/>
            <person name="Heiman D."/>
            <person name="Young S."/>
            <person name="Zeng Q."/>
            <person name="Abouelleil A."/>
            <person name="Aftuck L."/>
            <person name="Bessette D."/>
            <person name="Brown A."/>
            <person name="FitzGerald M."/>
            <person name="Lui A."/>
            <person name="Macdonald J.P."/>
            <person name="Priest M."/>
            <person name="Orbach M.J."/>
            <person name="Galgiani J.N."/>
            <person name="Kirkland T.N."/>
            <person name="Cole G.T."/>
            <person name="Birren B.W."/>
            <person name="Henn M.R."/>
            <person name="Taylor J.W."/>
            <person name="Rounsley S.D."/>
        </authorList>
    </citation>
    <scope>GENOME REANNOTATION</scope>
    <source>
        <strain>RS</strain>
    </source>
</reference>
<comment type="function">
    <text evidence="1">Component of the SRB8-11 complex. The SRB8-11 complex is a regulatory module of the Mediator complex which is itself involved in regulation of basal and activated RNA polymerase II-dependent transcription. The SRB8-11 complex may be involved in the transcriptional repression of a subset of genes regulated by Mediator. It may inhibit the association of the Mediator complex with RNA polymerase II to form the holoenzyme complex (By similarity).</text>
</comment>
<comment type="subunit">
    <text evidence="1">Component of the SRB8-11 complex, which itself associates with the Mediator complex.</text>
</comment>
<comment type="subcellular location">
    <subcellularLocation>
        <location evidence="3">Nucleus</location>
    </subcellularLocation>
</comment>
<comment type="similarity">
    <text evidence="3">Belongs to the Mediator complex subunit 12 family.</text>
</comment>
<organism>
    <name type="scientific">Coccidioides immitis (strain RS)</name>
    <name type="common">Valley fever fungus</name>
    <dbReference type="NCBI Taxonomy" id="246410"/>
    <lineage>
        <taxon>Eukaryota</taxon>
        <taxon>Fungi</taxon>
        <taxon>Dikarya</taxon>
        <taxon>Ascomycota</taxon>
        <taxon>Pezizomycotina</taxon>
        <taxon>Eurotiomycetes</taxon>
        <taxon>Eurotiomycetidae</taxon>
        <taxon>Onygenales</taxon>
        <taxon>Onygenaceae</taxon>
        <taxon>Coccidioides</taxon>
    </lineage>
</organism>
<gene>
    <name type="primary">SRB8</name>
    <name type="synonym">MED12</name>
    <name type="ORF">CIMG_00411</name>
</gene>
<accession>Q1EAK2</accession>
<accession>J3KGZ4</accession>
<protein>
    <recommendedName>
        <fullName>Mediator of RNA polymerase II transcription subunit 12</fullName>
    </recommendedName>
    <alternativeName>
        <fullName>Mediator complex subunit 12</fullName>
    </alternativeName>
</protein>
<feature type="chain" id="PRO_0000312970" description="Mediator of RNA polymerase II transcription subunit 12">
    <location>
        <begin position="1"/>
        <end position="1554"/>
    </location>
</feature>
<feature type="region of interest" description="Disordered" evidence="2">
    <location>
        <begin position="1"/>
        <end position="73"/>
    </location>
</feature>
<feature type="region of interest" description="Disordered" evidence="2">
    <location>
        <begin position="128"/>
        <end position="173"/>
    </location>
</feature>
<feature type="compositionally biased region" description="Low complexity" evidence="2">
    <location>
        <begin position="13"/>
        <end position="26"/>
    </location>
</feature>
<feature type="compositionally biased region" description="Polar residues" evidence="2">
    <location>
        <begin position="32"/>
        <end position="42"/>
    </location>
</feature>
<evidence type="ECO:0000250" key="1"/>
<evidence type="ECO:0000256" key="2">
    <source>
        <dbReference type="SAM" id="MobiDB-lite"/>
    </source>
</evidence>
<evidence type="ECO:0000305" key="3"/>
<name>SRB8_COCIM</name>